<name>RRP3_GIBZE</name>
<keyword id="KW-0067">ATP-binding</keyword>
<keyword id="KW-0347">Helicase</keyword>
<keyword id="KW-0378">Hydrolase</keyword>
<keyword id="KW-0547">Nucleotide-binding</keyword>
<keyword id="KW-0539">Nucleus</keyword>
<keyword id="KW-1185">Reference proteome</keyword>
<keyword id="KW-0690">Ribosome biogenesis</keyword>
<keyword id="KW-0694">RNA-binding</keyword>
<keyword id="KW-0698">rRNA processing</keyword>
<sequence>MNGAKRRKVAQDTPRNTKPVAQEKPARAEPKPSSDEESEEESATLEEPSAEETAVDAPKKTFKDLGVNDALCEACEKLNYKYPTPIQEKSIPVALQGRDIIGLAETGSGKTAAFALPVLQALLDKPQPLFGLVLAPTRELATQIGQAFEALGSLISLRCAVIVGGLDMVPQAIALGKKPHIVVATPGRLVDHLEKTKGFSLRTLKYLIMDEADRLLDMDFGPSIDKILKFVPRERRTYLFSATISSKIESLQRASLRDPVKVSISSNKYQTVSTLLQNYLFIPHPQKDVHLIYLINEHAGQSTIVFTRTVWETQRVSILLRTLGFGAIPLHGQLSQSSRLGALNKFRSGTRDILVATDVAARGLDIPSVDVVLNYDLPQDSKTYIHRVGRTARAGKSGVAISLVTQYDLEIYLRIEAALGKKLAEYPTEKEEVMAFQSRVEEAQRIARIEMKSFTEERGKKGSTLKGGRGKKGGKRGRDDMDREEG</sequence>
<comment type="function">
    <text evidence="1">ATP-dependent rRNA helicase required for pre-ribosomal RNA processing. Involved in the maturation of the 35S-pre-rRNA and to its cleavage to mature 18S rRNA.</text>
</comment>
<comment type="catalytic activity">
    <reaction evidence="1">
        <text>ATP + H2O = ADP + phosphate + H(+)</text>
        <dbReference type="Rhea" id="RHEA:13065"/>
        <dbReference type="ChEBI" id="CHEBI:15377"/>
        <dbReference type="ChEBI" id="CHEBI:15378"/>
        <dbReference type="ChEBI" id="CHEBI:30616"/>
        <dbReference type="ChEBI" id="CHEBI:43474"/>
        <dbReference type="ChEBI" id="CHEBI:456216"/>
        <dbReference type="EC" id="3.6.4.13"/>
    </reaction>
</comment>
<comment type="subunit">
    <text evidence="1">Interacts with the SSU processome.</text>
</comment>
<comment type="subcellular location">
    <subcellularLocation>
        <location evidence="5">Nucleus</location>
    </subcellularLocation>
</comment>
<comment type="domain">
    <text evidence="5">The Q motif is unique to and characteristic of the DEAD box family of RNA helicases and controls ATP binding and hydrolysis.</text>
</comment>
<comment type="similarity">
    <text evidence="5">Belongs to the DEAD box helicase family. DDX47/RRP3 subfamily.</text>
</comment>
<dbReference type="EC" id="3.6.4.13" evidence="1"/>
<dbReference type="EMBL" id="DS231664">
    <property type="protein sequence ID" value="ESU09127.1"/>
    <property type="molecule type" value="Genomic_DNA"/>
</dbReference>
<dbReference type="EMBL" id="HG970333">
    <property type="protein sequence ID" value="CEF78947.1"/>
    <property type="molecule type" value="Genomic_DNA"/>
</dbReference>
<dbReference type="RefSeq" id="XP_011321626.1">
    <property type="nucleotide sequence ID" value="XM_011323324.1"/>
</dbReference>
<dbReference type="SMR" id="Q4IFI0"/>
<dbReference type="FunCoup" id="Q4IFI0">
    <property type="interactions" value="1140"/>
</dbReference>
<dbReference type="STRING" id="229533.Q4IFI0"/>
<dbReference type="GeneID" id="23551298"/>
<dbReference type="KEGG" id="fgr:FGSG_04028"/>
<dbReference type="VEuPathDB" id="FungiDB:FGRAMPH1_01G14289"/>
<dbReference type="eggNOG" id="KOG0330">
    <property type="taxonomic scope" value="Eukaryota"/>
</dbReference>
<dbReference type="HOGENOM" id="CLU_003041_1_1_1"/>
<dbReference type="InParanoid" id="Q4IFI0"/>
<dbReference type="OrthoDB" id="86231at110618"/>
<dbReference type="Proteomes" id="UP000070720">
    <property type="component" value="Chromosome 2"/>
</dbReference>
<dbReference type="GO" id="GO:0005829">
    <property type="term" value="C:cytosol"/>
    <property type="evidence" value="ECO:0007669"/>
    <property type="project" value="TreeGrafter"/>
</dbReference>
<dbReference type="GO" id="GO:0005634">
    <property type="term" value="C:nucleus"/>
    <property type="evidence" value="ECO:0007669"/>
    <property type="project" value="UniProtKB-SubCell"/>
</dbReference>
<dbReference type="GO" id="GO:0005524">
    <property type="term" value="F:ATP binding"/>
    <property type="evidence" value="ECO:0007669"/>
    <property type="project" value="UniProtKB-KW"/>
</dbReference>
<dbReference type="GO" id="GO:0016887">
    <property type="term" value="F:ATP hydrolysis activity"/>
    <property type="evidence" value="ECO:0007669"/>
    <property type="project" value="RHEA"/>
</dbReference>
<dbReference type="GO" id="GO:0003723">
    <property type="term" value="F:RNA binding"/>
    <property type="evidence" value="ECO:0007669"/>
    <property type="project" value="UniProtKB-KW"/>
</dbReference>
<dbReference type="GO" id="GO:0003724">
    <property type="term" value="F:RNA helicase activity"/>
    <property type="evidence" value="ECO:0007669"/>
    <property type="project" value="UniProtKB-EC"/>
</dbReference>
<dbReference type="GO" id="GO:0006364">
    <property type="term" value="P:rRNA processing"/>
    <property type="evidence" value="ECO:0007669"/>
    <property type="project" value="UniProtKB-KW"/>
</dbReference>
<dbReference type="CDD" id="cd17954">
    <property type="entry name" value="DEADc_DDX47"/>
    <property type="match status" value="1"/>
</dbReference>
<dbReference type="CDD" id="cd18787">
    <property type="entry name" value="SF2_C_DEAD"/>
    <property type="match status" value="1"/>
</dbReference>
<dbReference type="Gene3D" id="3.40.50.300">
    <property type="entry name" value="P-loop containing nucleotide triphosphate hydrolases"/>
    <property type="match status" value="2"/>
</dbReference>
<dbReference type="InterPro" id="IPR044765">
    <property type="entry name" value="DDX47/Rrp3_DEADc"/>
</dbReference>
<dbReference type="InterPro" id="IPR011545">
    <property type="entry name" value="DEAD/DEAH_box_helicase_dom"/>
</dbReference>
<dbReference type="InterPro" id="IPR050079">
    <property type="entry name" value="DEAD_box_RNA_helicase"/>
</dbReference>
<dbReference type="InterPro" id="IPR014001">
    <property type="entry name" value="Helicase_ATP-bd"/>
</dbReference>
<dbReference type="InterPro" id="IPR001650">
    <property type="entry name" value="Helicase_C-like"/>
</dbReference>
<dbReference type="InterPro" id="IPR027417">
    <property type="entry name" value="P-loop_NTPase"/>
</dbReference>
<dbReference type="InterPro" id="IPR000629">
    <property type="entry name" value="RNA-helicase_DEAD-box_CS"/>
</dbReference>
<dbReference type="InterPro" id="IPR014014">
    <property type="entry name" value="RNA_helicase_DEAD_Q_motif"/>
</dbReference>
<dbReference type="PANTHER" id="PTHR47959">
    <property type="entry name" value="ATP-DEPENDENT RNA HELICASE RHLE-RELATED"/>
    <property type="match status" value="1"/>
</dbReference>
<dbReference type="PANTHER" id="PTHR47959:SF20">
    <property type="entry name" value="RNA HELICASE"/>
    <property type="match status" value="1"/>
</dbReference>
<dbReference type="Pfam" id="PF00270">
    <property type="entry name" value="DEAD"/>
    <property type="match status" value="1"/>
</dbReference>
<dbReference type="Pfam" id="PF00271">
    <property type="entry name" value="Helicase_C"/>
    <property type="match status" value="1"/>
</dbReference>
<dbReference type="SMART" id="SM00487">
    <property type="entry name" value="DEXDc"/>
    <property type="match status" value="1"/>
</dbReference>
<dbReference type="SMART" id="SM00490">
    <property type="entry name" value="HELICc"/>
    <property type="match status" value="1"/>
</dbReference>
<dbReference type="SUPFAM" id="SSF52540">
    <property type="entry name" value="P-loop containing nucleoside triphosphate hydrolases"/>
    <property type="match status" value="1"/>
</dbReference>
<dbReference type="PROSITE" id="PS00039">
    <property type="entry name" value="DEAD_ATP_HELICASE"/>
    <property type="match status" value="1"/>
</dbReference>
<dbReference type="PROSITE" id="PS51192">
    <property type="entry name" value="HELICASE_ATP_BIND_1"/>
    <property type="match status" value="1"/>
</dbReference>
<dbReference type="PROSITE" id="PS51194">
    <property type="entry name" value="HELICASE_CTER"/>
    <property type="match status" value="1"/>
</dbReference>
<dbReference type="PROSITE" id="PS51195">
    <property type="entry name" value="Q_MOTIF"/>
    <property type="match status" value="1"/>
</dbReference>
<feature type="chain" id="PRO_0000232275" description="ATP-dependent rRNA helicase RRP3">
    <location>
        <begin position="1"/>
        <end position="486"/>
    </location>
</feature>
<feature type="domain" description="Helicase ATP-binding" evidence="2">
    <location>
        <begin position="91"/>
        <end position="262"/>
    </location>
</feature>
<feature type="domain" description="Helicase C-terminal" evidence="3">
    <location>
        <begin position="286"/>
        <end position="434"/>
    </location>
</feature>
<feature type="region of interest" description="Disordered" evidence="4">
    <location>
        <begin position="1"/>
        <end position="58"/>
    </location>
</feature>
<feature type="region of interest" description="Disordered" evidence="4">
    <location>
        <begin position="451"/>
        <end position="486"/>
    </location>
</feature>
<feature type="short sequence motif" description="Q motif" evidence="5">
    <location>
        <begin position="60"/>
        <end position="88"/>
    </location>
</feature>
<feature type="short sequence motif" description="DEAD box" evidence="5">
    <location>
        <begin position="210"/>
        <end position="213"/>
    </location>
</feature>
<feature type="compositionally biased region" description="Basic and acidic residues" evidence="4">
    <location>
        <begin position="24"/>
        <end position="34"/>
    </location>
</feature>
<feature type="compositionally biased region" description="Acidic residues" evidence="4">
    <location>
        <begin position="35"/>
        <end position="54"/>
    </location>
</feature>
<feature type="compositionally biased region" description="Basic and acidic residues" evidence="4">
    <location>
        <begin position="451"/>
        <end position="460"/>
    </location>
</feature>
<feature type="compositionally biased region" description="Basic and acidic residues" evidence="4">
    <location>
        <begin position="476"/>
        <end position="486"/>
    </location>
</feature>
<feature type="binding site" evidence="2">
    <location>
        <begin position="104"/>
        <end position="111"/>
    </location>
    <ligand>
        <name>ATP</name>
        <dbReference type="ChEBI" id="CHEBI:30616"/>
    </ligand>
</feature>
<evidence type="ECO:0000250" key="1">
    <source>
        <dbReference type="UniProtKB" id="P38712"/>
    </source>
</evidence>
<evidence type="ECO:0000255" key="2">
    <source>
        <dbReference type="PROSITE-ProRule" id="PRU00541"/>
    </source>
</evidence>
<evidence type="ECO:0000255" key="3">
    <source>
        <dbReference type="PROSITE-ProRule" id="PRU00542"/>
    </source>
</evidence>
<evidence type="ECO:0000256" key="4">
    <source>
        <dbReference type="SAM" id="MobiDB-lite"/>
    </source>
</evidence>
<evidence type="ECO:0000305" key="5"/>
<proteinExistence type="inferred from homology"/>
<protein>
    <recommendedName>
        <fullName evidence="5">ATP-dependent rRNA helicase RRP3</fullName>
        <ecNumber evidence="1">3.6.4.13</ecNumber>
    </recommendedName>
</protein>
<gene>
    <name evidence="1" type="primary">RRP3</name>
    <name type="ORF">FGRRES_04028</name>
    <name type="ORF">FGSG_04028</name>
</gene>
<reference key="1">
    <citation type="journal article" date="2007" name="Science">
        <title>The Fusarium graminearum genome reveals a link between localized polymorphism and pathogen specialization.</title>
        <authorList>
            <person name="Cuomo C.A."/>
            <person name="Gueldener U."/>
            <person name="Xu J.-R."/>
            <person name="Trail F."/>
            <person name="Turgeon B.G."/>
            <person name="Di Pietro A."/>
            <person name="Walton J.D."/>
            <person name="Ma L.-J."/>
            <person name="Baker S.E."/>
            <person name="Rep M."/>
            <person name="Adam G."/>
            <person name="Antoniw J."/>
            <person name="Baldwin T."/>
            <person name="Calvo S.E."/>
            <person name="Chang Y.-L."/>
            <person name="DeCaprio D."/>
            <person name="Gale L.R."/>
            <person name="Gnerre S."/>
            <person name="Goswami R.S."/>
            <person name="Hammond-Kosack K."/>
            <person name="Harris L.J."/>
            <person name="Hilburn K."/>
            <person name="Kennell J.C."/>
            <person name="Kroken S."/>
            <person name="Magnuson J.K."/>
            <person name="Mannhaupt G."/>
            <person name="Mauceli E.W."/>
            <person name="Mewes H.-W."/>
            <person name="Mitterbauer R."/>
            <person name="Muehlbauer G."/>
            <person name="Muensterkoetter M."/>
            <person name="Nelson D."/>
            <person name="O'Donnell K."/>
            <person name="Ouellet T."/>
            <person name="Qi W."/>
            <person name="Quesneville H."/>
            <person name="Roncero M.I.G."/>
            <person name="Seong K.-Y."/>
            <person name="Tetko I.V."/>
            <person name="Urban M."/>
            <person name="Waalwijk C."/>
            <person name="Ward T.J."/>
            <person name="Yao J."/>
            <person name="Birren B.W."/>
            <person name="Kistler H.C."/>
        </authorList>
    </citation>
    <scope>NUCLEOTIDE SEQUENCE [LARGE SCALE GENOMIC DNA]</scope>
    <source>
        <strain>ATCC MYA-4620 / CBS 123657 / FGSC 9075 / NRRL 31084 / PH-1</strain>
    </source>
</reference>
<reference key="2">
    <citation type="journal article" date="2010" name="Nature">
        <title>Comparative genomics reveals mobile pathogenicity chromosomes in Fusarium.</title>
        <authorList>
            <person name="Ma L.-J."/>
            <person name="van der Does H.C."/>
            <person name="Borkovich K.A."/>
            <person name="Coleman J.J."/>
            <person name="Daboussi M.-J."/>
            <person name="Di Pietro A."/>
            <person name="Dufresne M."/>
            <person name="Freitag M."/>
            <person name="Grabherr M."/>
            <person name="Henrissat B."/>
            <person name="Houterman P.M."/>
            <person name="Kang S."/>
            <person name="Shim W.-B."/>
            <person name="Woloshuk C."/>
            <person name="Xie X."/>
            <person name="Xu J.-R."/>
            <person name="Antoniw J."/>
            <person name="Baker S.E."/>
            <person name="Bluhm B.H."/>
            <person name="Breakspear A."/>
            <person name="Brown D.W."/>
            <person name="Butchko R.A.E."/>
            <person name="Chapman S."/>
            <person name="Coulson R."/>
            <person name="Coutinho P.M."/>
            <person name="Danchin E.G.J."/>
            <person name="Diener A."/>
            <person name="Gale L.R."/>
            <person name="Gardiner D.M."/>
            <person name="Goff S."/>
            <person name="Hammond-Kosack K.E."/>
            <person name="Hilburn K."/>
            <person name="Hua-Van A."/>
            <person name="Jonkers W."/>
            <person name="Kazan K."/>
            <person name="Kodira C.D."/>
            <person name="Koehrsen M."/>
            <person name="Kumar L."/>
            <person name="Lee Y.-H."/>
            <person name="Li L."/>
            <person name="Manners J.M."/>
            <person name="Miranda-Saavedra D."/>
            <person name="Mukherjee M."/>
            <person name="Park G."/>
            <person name="Park J."/>
            <person name="Park S.-Y."/>
            <person name="Proctor R.H."/>
            <person name="Regev A."/>
            <person name="Ruiz-Roldan M.C."/>
            <person name="Sain D."/>
            <person name="Sakthikumar S."/>
            <person name="Sykes S."/>
            <person name="Schwartz D.C."/>
            <person name="Turgeon B.G."/>
            <person name="Wapinski I."/>
            <person name="Yoder O."/>
            <person name="Young S."/>
            <person name="Zeng Q."/>
            <person name="Zhou S."/>
            <person name="Galagan J."/>
            <person name="Cuomo C.A."/>
            <person name="Kistler H.C."/>
            <person name="Rep M."/>
        </authorList>
    </citation>
    <scope>GENOME REANNOTATION</scope>
    <source>
        <strain>ATCC MYA-4620 / CBS 123657 / FGSC 9075 / NRRL 31084 / PH-1</strain>
    </source>
</reference>
<reference key="3">
    <citation type="journal article" date="2015" name="BMC Genomics">
        <title>The completed genome sequence of the pathogenic ascomycete fungus Fusarium graminearum.</title>
        <authorList>
            <person name="King R."/>
            <person name="Urban M."/>
            <person name="Hammond-Kosack M.C.U."/>
            <person name="Hassani-Pak K."/>
            <person name="Hammond-Kosack K.E."/>
        </authorList>
    </citation>
    <scope>NUCLEOTIDE SEQUENCE [LARGE SCALE GENOMIC DNA]</scope>
    <source>
        <strain>ATCC MYA-4620 / CBS 123657 / FGSC 9075 / NRRL 31084 / PH-1</strain>
    </source>
</reference>
<accession>Q4IFI0</accession>
<accession>A0A0E0S622</accession>
<accession>V6R5C5</accession>
<organism>
    <name type="scientific">Gibberella zeae (strain ATCC MYA-4620 / CBS 123657 / FGSC 9075 / NRRL 31084 / PH-1)</name>
    <name type="common">Wheat head blight fungus</name>
    <name type="synonym">Fusarium graminearum</name>
    <dbReference type="NCBI Taxonomy" id="229533"/>
    <lineage>
        <taxon>Eukaryota</taxon>
        <taxon>Fungi</taxon>
        <taxon>Dikarya</taxon>
        <taxon>Ascomycota</taxon>
        <taxon>Pezizomycotina</taxon>
        <taxon>Sordariomycetes</taxon>
        <taxon>Hypocreomycetidae</taxon>
        <taxon>Hypocreales</taxon>
        <taxon>Nectriaceae</taxon>
        <taxon>Fusarium</taxon>
    </lineage>
</organism>